<dbReference type="EMBL" id="MN765045">
    <property type="protein sequence ID" value="QIQ51455.1"/>
    <property type="molecule type" value="mRNA"/>
</dbReference>
<dbReference type="GO" id="GO:0005576">
    <property type="term" value="C:extracellular region"/>
    <property type="evidence" value="ECO:0000314"/>
    <property type="project" value="UniProtKB"/>
</dbReference>
<sequence>MENSRTSTFTAYVTVAFLLISTFVTMVVTESQIVWVPCNPRSKKTDDAGICRNTY</sequence>
<comment type="subcellular location">
    <subcellularLocation>
        <location evidence="2">Secreted</location>
    </subcellularLocation>
</comment>
<comment type="tissue specificity">
    <text evidence="2">Expressed by the venom gland.</text>
</comment>
<comment type="PTM">
    <text evidence="2">Contains 1 disulfide bond.</text>
</comment>
<comment type="mass spectrometry"/>
<accession>A0A6G9KHE5</accession>
<name>TX17B_MANRB</name>
<organism evidence="4">
    <name type="scientific">Manica rubida</name>
    <name type="common">European giant red ant</name>
    <dbReference type="NCBI Taxonomy" id="219785"/>
    <lineage>
        <taxon>Eukaryota</taxon>
        <taxon>Metazoa</taxon>
        <taxon>Ecdysozoa</taxon>
        <taxon>Arthropoda</taxon>
        <taxon>Hexapoda</taxon>
        <taxon>Insecta</taxon>
        <taxon>Pterygota</taxon>
        <taxon>Neoptera</taxon>
        <taxon>Endopterygota</taxon>
        <taxon>Hymenoptera</taxon>
        <taxon>Apocrita</taxon>
        <taxon>Aculeata</taxon>
        <taxon>Formicoidea</taxon>
        <taxon>Formicidae</taxon>
        <taxon>Myrmicinae</taxon>
        <taxon>Manica</taxon>
    </lineage>
</organism>
<protein>
    <recommendedName>
        <fullName evidence="3">U17-myrmicitoxin-Mri1b</fullName>
        <shortName evidence="3">U17-MYRTX-Mri1b</shortName>
    </recommendedName>
</protein>
<proteinExistence type="evidence at protein level"/>
<keyword id="KW-0903">Direct protein sequencing</keyword>
<keyword id="KW-1015">Disulfide bond</keyword>
<keyword id="KW-0873">Pyrrolidone carboxylic acid</keyword>
<keyword id="KW-0964">Secreted</keyword>
<keyword id="KW-0732">Signal</keyword>
<reference evidence="4" key="1">
    <citation type="journal article" date="2020" name="J. Proteome Res.">
        <title>Venom Peptide Repertoire of the European Myrmicine Ant Manica rubida: Identification of Insecticidal Toxins.</title>
        <authorList>
            <person name="Touchard A."/>
            <person name="Aili S.R."/>
            <person name="Tene N."/>
            <person name="Barasse V."/>
            <person name="Klopp C."/>
            <person name="Dejean A."/>
            <person name="Kini R.M."/>
            <person name="Mrinalini X."/>
            <person name="Coquet L."/>
            <person name="Jouenne T."/>
            <person name="Lefranc B."/>
            <person name="Leprince J."/>
            <person name="Escoubas P."/>
            <person name="Nicholson G.M."/>
            <person name="Treilhou M."/>
            <person name="Bonnafe E."/>
        </authorList>
    </citation>
    <scope>NUCLEOTIDE SEQUENCE [MRNA]</scope>
    <scope>PROTEIN SEQUENCE OF 36-53</scope>
    <scope>FUNCTION</scope>
    <scope>SUBCELLULAR LOCATION</scope>
    <scope>TISSUE SPECIFICITY</scope>
    <scope>DISULFIDE BOND</scope>
    <scope>MASS SPECTROMETRY</scope>
    <scope>PYROGLUTAMATE FORMATION AT GLN-32</scope>
    <source>
        <tissue evidence="4">Venom gland</tissue>
    </source>
</reference>
<feature type="signal peptide" evidence="1">
    <location>
        <begin position="1"/>
        <end position="31"/>
    </location>
</feature>
<feature type="peptide" id="PRO_0000453057" description="U17-myrmicitoxin-Mri1b" evidence="2">
    <location>
        <begin position="32"/>
        <end position="55"/>
    </location>
</feature>
<feature type="modified residue" description="Pyrrolidone carboxylic acid" evidence="2">
    <location>
        <position position="32"/>
    </location>
</feature>
<evidence type="ECO:0000255" key="1"/>
<evidence type="ECO:0000269" key="2">
    <source>
    </source>
</evidence>
<evidence type="ECO:0000303" key="3">
    <source>
    </source>
</evidence>
<evidence type="ECO:0000312" key="4">
    <source>
        <dbReference type="EMBL" id="QIQ51455.1"/>
    </source>
</evidence>